<feature type="chain" id="PRO_0000073086" description="Ovomucoid">
    <location>
        <begin position="1" status="less than"/>
        <end position="52" status="greater than"/>
    </location>
</feature>
<feature type="domain" description="Kazal-like" evidence="1">
    <location>
        <begin position="2"/>
        <end position="52"/>
    </location>
</feature>
<feature type="site" description="Reactive bond 3">
    <location>
        <begin position="14"/>
        <end position="15"/>
    </location>
</feature>
<feature type="glycosylation site" description="N-linked (GlcNAc...) asparagine">
    <location>
        <position position="41"/>
    </location>
</feature>
<feature type="disulfide bond">
    <location>
        <begin position="4"/>
        <end position="34"/>
    </location>
</feature>
<feature type="disulfide bond">
    <location>
        <begin position="12"/>
        <end position="31"/>
    </location>
</feature>
<feature type="disulfide bond">
    <location>
        <begin position="20"/>
        <end position="52"/>
    </location>
</feature>
<feature type="non-terminal residue">
    <location>
        <position position="1"/>
    </location>
</feature>
<feature type="non-terminal residue">
    <location>
        <position position="52"/>
    </location>
</feature>
<organism>
    <name type="scientific">Coturnix delegorguei</name>
    <name type="common">Harlequin quail</name>
    <dbReference type="NCBI Taxonomy" id="9093"/>
    <lineage>
        <taxon>Eukaryota</taxon>
        <taxon>Metazoa</taxon>
        <taxon>Chordata</taxon>
        <taxon>Craniata</taxon>
        <taxon>Vertebrata</taxon>
        <taxon>Euteleostomi</taxon>
        <taxon>Archelosauria</taxon>
        <taxon>Archosauria</taxon>
        <taxon>Dinosauria</taxon>
        <taxon>Saurischia</taxon>
        <taxon>Theropoda</taxon>
        <taxon>Coelurosauria</taxon>
        <taxon>Aves</taxon>
        <taxon>Neognathae</taxon>
        <taxon>Galloanserae</taxon>
        <taxon>Galliformes</taxon>
        <taxon>Phasianidae</taxon>
        <taxon>Perdicinae</taxon>
        <taxon>Coturnix</taxon>
    </lineage>
</organism>
<dbReference type="PIR" id="I31441">
    <property type="entry name" value="I31441"/>
</dbReference>
<dbReference type="SMR" id="P05600"/>
<dbReference type="GO" id="GO:0005576">
    <property type="term" value="C:extracellular region"/>
    <property type="evidence" value="ECO:0007669"/>
    <property type="project" value="UniProtKB-SubCell"/>
</dbReference>
<dbReference type="GO" id="GO:0004867">
    <property type="term" value="F:serine-type endopeptidase inhibitor activity"/>
    <property type="evidence" value="ECO:0007669"/>
    <property type="project" value="UniProtKB-KW"/>
</dbReference>
<dbReference type="CDD" id="cd00104">
    <property type="entry name" value="KAZAL_FS"/>
    <property type="match status" value="1"/>
</dbReference>
<dbReference type="FunFam" id="3.30.60.30:FF:000037">
    <property type="entry name" value="Ovomucoid"/>
    <property type="match status" value="1"/>
</dbReference>
<dbReference type="Gene3D" id="3.30.60.30">
    <property type="match status" value="1"/>
</dbReference>
<dbReference type="InterPro" id="IPR051597">
    <property type="entry name" value="Bifunctional_prot_inhibitor"/>
</dbReference>
<dbReference type="InterPro" id="IPR002350">
    <property type="entry name" value="Kazal_dom"/>
</dbReference>
<dbReference type="InterPro" id="IPR036058">
    <property type="entry name" value="Kazal_dom_sf"/>
</dbReference>
<dbReference type="InterPro" id="IPR001239">
    <property type="entry name" value="Prot_inh_Kazal-m"/>
</dbReference>
<dbReference type="PANTHER" id="PTHR47729:SF1">
    <property type="entry name" value="OVOMUCOID-LIKE-RELATED"/>
    <property type="match status" value="1"/>
</dbReference>
<dbReference type="PANTHER" id="PTHR47729">
    <property type="entry name" value="SERINE PEPTIDASE INHIBITOR, KAZAL TYPE 2, TANDEM DUPLICATE 1-RELATED"/>
    <property type="match status" value="1"/>
</dbReference>
<dbReference type="Pfam" id="PF00050">
    <property type="entry name" value="Kazal_1"/>
    <property type="match status" value="1"/>
</dbReference>
<dbReference type="PRINTS" id="PR00290">
    <property type="entry name" value="KAZALINHBTR"/>
</dbReference>
<dbReference type="SMART" id="SM00280">
    <property type="entry name" value="KAZAL"/>
    <property type="match status" value="1"/>
</dbReference>
<dbReference type="SUPFAM" id="SSF100895">
    <property type="entry name" value="Kazal-type serine protease inhibitors"/>
    <property type="match status" value="1"/>
</dbReference>
<dbReference type="PROSITE" id="PS00282">
    <property type="entry name" value="KAZAL_1"/>
    <property type="match status" value="1"/>
</dbReference>
<dbReference type="PROSITE" id="PS51465">
    <property type="entry name" value="KAZAL_2"/>
    <property type="match status" value="1"/>
</dbReference>
<keyword id="KW-0903">Direct protein sequencing</keyword>
<keyword id="KW-1015">Disulfide bond</keyword>
<keyword id="KW-0325">Glycoprotein</keyword>
<keyword id="KW-0646">Protease inhibitor</keyword>
<keyword id="KW-0677">Repeat</keyword>
<keyword id="KW-0964">Secreted</keyword>
<keyword id="KW-0722">Serine protease inhibitor</keyword>
<protein>
    <recommendedName>
        <fullName>Ovomucoid</fullName>
    </recommendedName>
</protein>
<evidence type="ECO:0000255" key="1">
    <source>
        <dbReference type="PROSITE-ProRule" id="PRU00798"/>
    </source>
</evidence>
<name>IOVO_COTDE</name>
<accession>P05600</accession>
<reference key="1">
    <citation type="journal article" date="1987" name="Biochemistry">
        <title>Ovomucoid third domains from 100 avian species: isolation, sequences, and hypervariability of enzyme-inhibitor contact residues.</title>
        <authorList>
            <person name="Laskowski M. Jr."/>
            <person name="Kato I."/>
            <person name="Ardelt W."/>
            <person name="Cook J."/>
            <person name="Denton A."/>
            <person name="Empie M.W."/>
            <person name="Kohr W.J."/>
            <person name="Park S.J."/>
            <person name="Parks K."/>
            <person name="Schatzley B.L."/>
            <person name="Schoenberger O.L."/>
            <person name="Tashiro M."/>
            <person name="Vichot G."/>
            <person name="Whatley H.E."/>
            <person name="Wieczorek A."/>
            <person name="Wieczorek M."/>
        </authorList>
    </citation>
    <scope>PROTEIN SEQUENCE</scope>
</reference>
<sequence length="52" mass="5695">SVDCSEYPKPACPKDYRPVCGSDNKTYGNKCNFCNAVVESNGTLTLNRFGKC</sequence>
<proteinExistence type="evidence at protein level"/>
<comment type="subcellular location">
    <subcellularLocation>
        <location>Secreted</location>
    </subcellularLocation>
</comment>
<comment type="domain">
    <text>Avian ovomucoid consists of three homologous, tandem Kazal family inhibitory domains.</text>
</comment>